<reference key="1">
    <citation type="journal article" date="2002" name="Proc. Natl. Acad. Sci. U.S.A.">
        <title>The genome sequence of the facultative intracellular pathogen Brucella melitensis.</title>
        <authorList>
            <person name="DelVecchio V.G."/>
            <person name="Kapatral V."/>
            <person name="Redkar R.J."/>
            <person name="Patra G."/>
            <person name="Mujer C."/>
            <person name="Los T."/>
            <person name="Ivanova N."/>
            <person name="Anderson I."/>
            <person name="Bhattacharyya A."/>
            <person name="Lykidis A."/>
            <person name="Reznik G."/>
            <person name="Jablonski L."/>
            <person name="Larsen N."/>
            <person name="D'Souza M."/>
            <person name="Bernal A."/>
            <person name="Mazur M."/>
            <person name="Goltsman E."/>
            <person name="Selkov E."/>
            <person name="Elzer P.H."/>
            <person name="Hagius S."/>
            <person name="O'Callaghan D."/>
            <person name="Letesson J.-J."/>
            <person name="Haselkorn R."/>
            <person name="Kyrpides N.C."/>
            <person name="Overbeek R."/>
        </authorList>
    </citation>
    <scope>NUCLEOTIDE SEQUENCE [LARGE SCALE GENOMIC DNA]</scope>
    <source>
        <strain>ATCC 23456 / CCUG 17765 / NCTC 10094 / 16M</strain>
    </source>
</reference>
<feature type="signal peptide" evidence="2">
    <location>
        <begin position="1"/>
        <end position="23"/>
    </location>
</feature>
<feature type="chain" id="PRO_0000290144" description="Putative peptide-binding periplasmic protein BMEII0210">
    <location>
        <begin position="24"/>
        <end position="514"/>
    </location>
</feature>
<name>Y210_BRUME</name>
<gene>
    <name type="ordered locus">BMEII0210</name>
</gene>
<organism>
    <name type="scientific">Brucella melitensis biotype 1 (strain ATCC 23456 / CCUG 17765 / NCTC 10094 / 16M)</name>
    <dbReference type="NCBI Taxonomy" id="224914"/>
    <lineage>
        <taxon>Bacteria</taxon>
        <taxon>Pseudomonadati</taxon>
        <taxon>Pseudomonadota</taxon>
        <taxon>Alphaproteobacteria</taxon>
        <taxon>Hyphomicrobiales</taxon>
        <taxon>Brucellaceae</taxon>
        <taxon>Brucella/Ochrobactrum group</taxon>
        <taxon>Brucella</taxon>
    </lineage>
</organism>
<proteinExistence type="inferred from homology"/>
<evidence type="ECO:0000250" key="1"/>
<evidence type="ECO:0000255" key="2"/>
<evidence type="ECO:0000305" key="3"/>
<dbReference type="EMBL" id="AE008918">
    <property type="protein sequence ID" value="AAL53451.1"/>
    <property type="status" value="ALT_INIT"/>
    <property type="molecule type" value="Genomic_DNA"/>
</dbReference>
<dbReference type="PIR" id="AH3535">
    <property type="entry name" value="AH3535"/>
</dbReference>
<dbReference type="RefSeq" id="WP_002968630.1">
    <property type="nucleotide sequence ID" value="NZ_GG703779.1"/>
</dbReference>
<dbReference type="SMR" id="Q8YDG6"/>
<dbReference type="GeneID" id="29595824"/>
<dbReference type="KEGG" id="bme:BMEII0210"/>
<dbReference type="KEGG" id="bmel:DK63_3042"/>
<dbReference type="PATRIC" id="fig|224914.52.peg.3188"/>
<dbReference type="eggNOG" id="COG0747">
    <property type="taxonomic scope" value="Bacteria"/>
</dbReference>
<dbReference type="PhylomeDB" id="Q8YDG6"/>
<dbReference type="Proteomes" id="UP000000419">
    <property type="component" value="Chromosome II"/>
</dbReference>
<dbReference type="GO" id="GO:0043190">
    <property type="term" value="C:ATP-binding cassette (ABC) transporter complex"/>
    <property type="evidence" value="ECO:0007669"/>
    <property type="project" value="InterPro"/>
</dbReference>
<dbReference type="GO" id="GO:0030288">
    <property type="term" value="C:outer membrane-bounded periplasmic space"/>
    <property type="evidence" value="ECO:0007669"/>
    <property type="project" value="UniProtKB-ARBA"/>
</dbReference>
<dbReference type="GO" id="GO:1904680">
    <property type="term" value="F:peptide transmembrane transporter activity"/>
    <property type="evidence" value="ECO:0007669"/>
    <property type="project" value="TreeGrafter"/>
</dbReference>
<dbReference type="GO" id="GO:0015833">
    <property type="term" value="P:peptide transport"/>
    <property type="evidence" value="ECO:0007669"/>
    <property type="project" value="TreeGrafter"/>
</dbReference>
<dbReference type="CDD" id="cd08502">
    <property type="entry name" value="PBP2_NikA_DppA_OppA_like_16"/>
    <property type="match status" value="1"/>
</dbReference>
<dbReference type="Gene3D" id="3.10.105.10">
    <property type="entry name" value="Dipeptide-binding Protein, Domain 3"/>
    <property type="match status" value="1"/>
</dbReference>
<dbReference type="Gene3D" id="3.40.190.10">
    <property type="entry name" value="Periplasmic binding protein-like II"/>
    <property type="match status" value="1"/>
</dbReference>
<dbReference type="InterPro" id="IPR030678">
    <property type="entry name" value="Peptide/Ni-bd"/>
</dbReference>
<dbReference type="InterPro" id="IPR039424">
    <property type="entry name" value="SBP_5"/>
</dbReference>
<dbReference type="InterPro" id="IPR023765">
    <property type="entry name" value="SBP_5_CS"/>
</dbReference>
<dbReference type="InterPro" id="IPR000914">
    <property type="entry name" value="SBP_5_dom"/>
</dbReference>
<dbReference type="PANTHER" id="PTHR30290:SF38">
    <property type="entry name" value="D,D-DIPEPTIDE-BINDING PERIPLASMIC PROTEIN DDPA-RELATED"/>
    <property type="match status" value="1"/>
</dbReference>
<dbReference type="PANTHER" id="PTHR30290">
    <property type="entry name" value="PERIPLASMIC BINDING COMPONENT OF ABC TRANSPORTER"/>
    <property type="match status" value="1"/>
</dbReference>
<dbReference type="Pfam" id="PF00496">
    <property type="entry name" value="SBP_bac_5"/>
    <property type="match status" value="1"/>
</dbReference>
<dbReference type="PIRSF" id="PIRSF002741">
    <property type="entry name" value="MppA"/>
    <property type="match status" value="1"/>
</dbReference>
<dbReference type="SUPFAM" id="SSF53850">
    <property type="entry name" value="Periplasmic binding protein-like II"/>
    <property type="match status" value="1"/>
</dbReference>
<dbReference type="PROSITE" id="PS01040">
    <property type="entry name" value="SBP_BACTERIAL_5"/>
    <property type="match status" value="1"/>
</dbReference>
<comment type="function">
    <text evidence="1">Probably part of an ABC transporter complex that could be involved in peptide import.</text>
</comment>
<comment type="subunit">
    <text evidence="3">The complex is composed of two ATP-binding proteins (BMEII0205 and BMEII0206), two transmembrane proteins (BMEII0207/BMEII0208 and BMEII0209) and a solute-binding protein (BMEII0210).</text>
</comment>
<comment type="subcellular location">
    <subcellularLocation>
        <location evidence="3">Periplasm</location>
    </subcellularLocation>
</comment>
<comment type="similarity">
    <text evidence="3">Belongs to the bacterial solute-binding protein 5 family.</text>
</comment>
<comment type="sequence caution" evidence="3">
    <conflict type="erroneous initiation">
        <sequence resource="EMBL-CDS" id="AAL53451"/>
    </conflict>
</comment>
<keyword id="KW-0574">Periplasm</keyword>
<keyword id="KW-0732">Signal</keyword>
<keyword id="KW-0813">Transport</keyword>
<sequence length="514" mass="57237">MTIRTLFNAILLSTTLLAAPSLAETPKEGGTLVYASNAGPGTLDPHMGNSLVELEIAHQIYEGLVTIDANYNTATMLAESYVLSEDGKTLTFKLRKGVKFHDGSDMKSDDVLASFERYAKVSPNAKVLDIVDHYETPDDYTFVIHLKEVNAAFLDTLKSPVYPFSIIPAEQKDKPARELDIIGTGPFKLGEWKRDSHLYLEKFADYVADKGKPASGYAGEKKVYVDKVRVNFLSETNSRVAAIQTGEAQVTTQLTADATKKLQNAPGVKPLEIIPFCQQYLIVNTQQAPTNNSAIRKALRTAVNAEDILVVSGEAATMDPSMSYPGGAYYSKENAEPYYNQNNPDEAAKMLADAGYKGEELVLLTNSNYDYMRDNIVLLAEQLQAAGFKARVEMTDWATNSTAMQTGSGKWNVSTTSFCSNPLLGPQQWQSVVYLFPQVKSDALMDTAYKKFFTSLKLEDRRAAWLDIEKHILDEAYMIKISNRASGRAYRPDDIGGYPEYYMNFFWNVWLKKQ</sequence>
<protein>
    <recommendedName>
        <fullName>Putative peptide-binding periplasmic protein BMEII0210</fullName>
    </recommendedName>
</protein>
<accession>Q8YDG6</accession>